<proteinExistence type="inferred from homology"/>
<accession>Q1JFM8</accession>
<comment type="function">
    <text evidence="1">Involved in the synthesis of autoinducer 2 (AI-2) which is secreted by bacteria and is used to communicate both the cell density and the metabolic potential of the environment. The regulation of gene expression in response to changes in cell density is called quorum sensing. Catalyzes the transformation of S-ribosylhomocysteine (RHC) to homocysteine (HC) and 4,5-dihydroxy-2,3-pentadione (DPD).</text>
</comment>
<comment type="catalytic activity">
    <reaction evidence="1">
        <text>S-(5-deoxy-D-ribos-5-yl)-L-homocysteine = (S)-4,5-dihydroxypentane-2,3-dione + L-homocysteine</text>
        <dbReference type="Rhea" id="RHEA:17753"/>
        <dbReference type="ChEBI" id="CHEBI:29484"/>
        <dbReference type="ChEBI" id="CHEBI:58195"/>
        <dbReference type="ChEBI" id="CHEBI:58199"/>
        <dbReference type="EC" id="4.4.1.21"/>
    </reaction>
</comment>
<comment type="cofactor">
    <cofactor evidence="1">
        <name>Fe cation</name>
        <dbReference type="ChEBI" id="CHEBI:24875"/>
    </cofactor>
    <text evidence="1">Binds 1 Fe cation per subunit.</text>
</comment>
<comment type="subunit">
    <text evidence="1">Homodimer.</text>
</comment>
<comment type="similarity">
    <text evidence="1">Belongs to the LuxS family.</text>
</comment>
<comment type="sequence caution" evidence="2">
    <conflict type="erroneous initiation">
        <sequence resource="EMBL-CDS" id="ABF34531"/>
    </conflict>
</comment>
<feature type="chain" id="PRO_0000298044" description="S-ribosylhomocysteine lyase">
    <location>
        <begin position="1"/>
        <end position="160"/>
    </location>
</feature>
<feature type="binding site" evidence="1">
    <location>
        <position position="57"/>
    </location>
    <ligand>
        <name>Fe cation</name>
        <dbReference type="ChEBI" id="CHEBI:24875"/>
    </ligand>
</feature>
<feature type="binding site" evidence="1">
    <location>
        <position position="61"/>
    </location>
    <ligand>
        <name>Fe cation</name>
        <dbReference type="ChEBI" id="CHEBI:24875"/>
    </ligand>
</feature>
<feature type="binding site" evidence="1">
    <location>
        <position position="127"/>
    </location>
    <ligand>
        <name>Fe cation</name>
        <dbReference type="ChEBI" id="CHEBI:24875"/>
    </ligand>
</feature>
<sequence length="160" mass="17979">MTKEVIVESFELDHTIVKAPYVRLISEEFGPKGDRITNFDVRLVQPNQNSIETAGLHTIEHLLAKLIRQRIDGMIDCSPFGCRTGFHLIMWGKHSSTDIAKVIKSSLEEIATGITWEDVPGTTIESCGNYKDHSLFAAKEWAQLIIDQGISDDPFSRHVI</sequence>
<evidence type="ECO:0000255" key="1">
    <source>
        <dbReference type="HAMAP-Rule" id="MF_00091"/>
    </source>
</evidence>
<evidence type="ECO:0000305" key="2"/>
<gene>
    <name evidence="1" type="primary">luxS</name>
    <name type="ordered locus">MGAS10270_Spy1466</name>
</gene>
<dbReference type="EC" id="4.4.1.21" evidence="1"/>
<dbReference type="EMBL" id="CP000260">
    <property type="protein sequence ID" value="ABF34531.1"/>
    <property type="status" value="ALT_INIT"/>
    <property type="molecule type" value="Genomic_DNA"/>
</dbReference>
<dbReference type="SMR" id="Q1JFM8"/>
<dbReference type="KEGG" id="sph:MGAS10270_Spy1466"/>
<dbReference type="HOGENOM" id="CLU_107531_2_1_9"/>
<dbReference type="Proteomes" id="UP000002436">
    <property type="component" value="Chromosome"/>
</dbReference>
<dbReference type="GO" id="GO:0005506">
    <property type="term" value="F:iron ion binding"/>
    <property type="evidence" value="ECO:0007669"/>
    <property type="project" value="InterPro"/>
</dbReference>
<dbReference type="GO" id="GO:0043768">
    <property type="term" value="F:S-ribosylhomocysteine lyase activity"/>
    <property type="evidence" value="ECO:0007669"/>
    <property type="project" value="UniProtKB-UniRule"/>
</dbReference>
<dbReference type="GO" id="GO:0009372">
    <property type="term" value="P:quorum sensing"/>
    <property type="evidence" value="ECO:0007669"/>
    <property type="project" value="UniProtKB-UniRule"/>
</dbReference>
<dbReference type="Gene3D" id="3.30.1360.80">
    <property type="entry name" value="S-ribosylhomocysteinase (LuxS)"/>
    <property type="match status" value="1"/>
</dbReference>
<dbReference type="HAMAP" id="MF_00091">
    <property type="entry name" value="LuxS"/>
    <property type="match status" value="1"/>
</dbReference>
<dbReference type="InterPro" id="IPR037005">
    <property type="entry name" value="LuxS_sf"/>
</dbReference>
<dbReference type="InterPro" id="IPR011249">
    <property type="entry name" value="Metalloenz_LuxS/M16"/>
</dbReference>
<dbReference type="InterPro" id="IPR003815">
    <property type="entry name" value="S-ribosylhomocysteinase"/>
</dbReference>
<dbReference type="NCBIfam" id="NF002607">
    <property type="entry name" value="PRK02260.2-5"/>
    <property type="match status" value="1"/>
</dbReference>
<dbReference type="NCBIfam" id="NF002608">
    <property type="entry name" value="PRK02260.3-1"/>
    <property type="match status" value="1"/>
</dbReference>
<dbReference type="PANTHER" id="PTHR35799">
    <property type="entry name" value="S-RIBOSYLHOMOCYSTEINE LYASE"/>
    <property type="match status" value="1"/>
</dbReference>
<dbReference type="PANTHER" id="PTHR35799:SF1">
    <property type="entry name" value="S-RIBOSYLHOMOCYSTEINE LYASE"/>
    <property type="match status" value="1"/>
</dbReference>
<dbReference type="Pfam" id="PF02664">
    <property type="entry name" value="LuxS"/>
    <property type="match status" value="1"/>
</dbReference>
<dbReference type="PIRSF" id="PIRSF006160">
    <property type="entry name" value="AI2"/>
    <property type="match status" value="1"/>
</dbReference>
<dbReference type="PRINTS" id="PR01487">
    <property type="entry name" value="LUXSPROTEIN"/>
</dbReference>
<dbReference type="SUPFAM" id="SSF63411">
    <property type="entry name" value="LuxS/MPP-like metallohydrolase"/>
    <property type="match status" value="1"/>
</dbReference>
<reference key="1">
    <citation type="journal article" date="2006" name="Proc. Natl. Acad. Sci. U.S.A.">
        <title>Molecular genetic anatomy of inter- and intraserotype variation in the human bacterial pathogen group A Streptococcus.</title>
        <authorList>
            <person name="Beres S.B."/>
            <person name="Richter E.W."/>
            <person name="Nagiec M.J."/>
            <person name="Sumby P."/>
            <person name="Porcella S.F."/>
            <person name="DeLeo F.R."/>
            <person name="Musser J.M."/>
        </authorList>
    </citation>
    <scope>NUCLEOTIDE SEQUENCE [LARGE SCALE GENOMIC DNA]</scope>
    <source>
        <strain>MGAS10270</strain>
    </source>
</reference>
<keyword id="KW-0071">Autoinducer synthesis</keyword>
<keyword id="KW-0408">Iron</keyword>
<keyword id="KW-0456">Lyase</keyword>
<keyword id="KW-0479">Metal-binding</keyword>
<keyword id="KW-0673">Quorum sensing</keyword>
<name>LUXS_STRPD</name>
<organism>
    <name type="scientific">Streptococcus pyogenes serotype M2 (strain MGAS10270)</name>
    <dbReference type="NCBI Taxonomy" id="370552"/>
    <lineage>
        <taxon>Bacteria</taxon>
        <taxon>Bacillati</taxon>
        <taxon>Bacillota</taxon>
        <taxon>Bacilli</taxon>
        <taxon>Lactobacillales</taxon>
        <taxon>Streptococcaceae</taxon>
        <taxon>Streptococcus</taxon>
    </lineage>
</organism>
<protein>
    <recommendedName>
        <fullName evidence="1">S-ribosylhomocysteine lyase</fullName>
        <ecNumber evidence="1">4.4.1.21</ecNumber>
    </recommendedName>
    <alternativeName>
        <fullName evidence="1">AI-2 synthesis protein</fullName>
    </alternativeName>
    <alternativeName>
        <fullName evidence="1">Autoinducer-2 production protein LuxS</fullName>
    </alternativeName>
</protein>